<comment type="function">
    <text evidence="2">Transaldolase is important for the balance of metabolites in the pentose-phosphate pathway.</text>
</comment>
<comment type="catalytic activity">
    <reaction evidence="2">
        <text>D-sedoheptulose 7-phosphate + D-glyceraldehyde 3-phosphate = D-erythrose 4-phosphate + beta-D-fructose 6-phosphate</text>
        <dbReference type="Rhea" id="RHEA:17053"/>
        <dbReference type="ChEBI" id="CHEBI:16897"/>
        <dbReference type="ChEBI" id="CHEBI:57483"/>
        <dbReference type="ChEBI" id="CHEBI:57634"/>
        <dbReference type="ChEBI" id="CHEBI:59776"/>
        <dbReference type="EC" id="2.2.1.2"/>
    </reaction>
</comment>
<comment type="pathway">
    <text evidence="2">Carbohydrate degradation; pentose phosphate pathway; D-glyceraldehyde 3-phosphate and beta-D-fructose 6-phosphate from D-ribose 5-phosphate and D-xylulose 5-phosphate (non-oxidative stage): step 2/3.</text>
</comment>
<comment type="subunit">
    <text evidence="1">Homodimer.</text>
</comment>
<comment type="subcellular location">
    <subcellularLocation>
        <location evidence="2">Cytoplasm</location>
    </subcellularLocation>
</comment>
<comment type="similarity">
    <text evidence="2">Belongs to the transaldolase family. Type 1 subfamily.</text>
</comment>
<sequence>MANTLEQLKLYTTIVADTGDIEAIKRYQPEDATTNPSLILKAAQIPEYESLIDNAIDWAKSQSDDLAQQLDDASDKLAVNIGVEILKLVPGRISTEVDARLSFDKEQSIAKAHKLVRLYKEAGVDKSRILIKLASTWEGICAAKELEKEGINCNLTLLFSFAQARACAEAGAYLISPFVGRILDWYKKDTGKDYDAVNDPGVVSVTEIYNYYKQHGFNTVVMGASFRNIGEIIELAGCDRLTIGPSLLEELANSQIDITPKLVAATSTVAAEAPLTEAQFRWDFNQDPMAVDKLAEGIRNFAIDQGKLEVMLTAKLAN</sequence>
<keyword id="KW-0963">Cytoplasm</keyword>
<keyword id="KW-0570">Pentose shunt</keyword>
<keyword id="KW-0704">Schiff base</keyword>
<keyword id="KW-0808">Transferase</keyword>
<name>TAL_SHEB2</name>
<reference key="1">
    <citation type="submission" date="2008-12" db="EMBL/GenBank/DDBJ databases">
        <title>Complete sequence of chromosome of Shewanella baltica OS223.</title>
        <authorList>
            <consortium name="US DOE Joint Genome Institute"/>
            <person name="Lucas S."/>
            <person name="Copeland A."/>
            <person name="Lapidus A."/>
            <person name="Glavina del Rio T."/>
            <person name="Dalin E."/>
            <person name="Tice H."/>
            <person name="Bruce D."/>
            <person name="Goodwin L."/>
            <person name="Pitluck S."/>
            <person name="Chertkov O."/>
            <person name="Meincke L."/>
            <person name="Brettin T."/>
            <person name="Detter J.C."/>
            <person name="Han C."/>
            <person name="Kuske C.R."/>
            <person name="Larimer F."/>
            <person name="Land M."/>
            <person name="Hauser L."/>
            <person name="Kyrpides N."/>
            <person name="Ovchinnikova G."/>
            <person name="Brettar I."/>
            <person name="Rodrigues J."/>
            <person name="Konstantinidis K."/>
            <person name="Tiedje J."/>
        </authorList>
    </citation>
    <scope>NUCLEOTIDE SEQUENCE [LARGE SCALE GENOMIC DNA]</scope>
    <source>
        <strain>OS223</strain>
    </source>
</reference>
<protein>
    <recommendedName>
        <fullName evidence="2">Transaldolase</fullName>
        <ecNumber evidence="2">2.2.1.2</ecNumber>
    </recommendedName>
</protein>
<organism>
    <name type="scientific">Shewanella baltica (strain OS223)</name>
    <dbReference type="NCBI Taxonomy" id="407976"/>
    <lineage>
        <taxon>Bacteria</taxon>
        <taxon>Pseudomonadati</taxon>
        <taxon>Pseudomonadota</taxon>
        <taxon>Gammaproteobacteria</taxon>
        <taxon>Alteromonadales</taxon>
        <taxon>Shewanellaceae</taxon>
        <taxon>Shewanella</taxon>
    </lineage>
</organism>
<evidence type="ECO:0000250" key="1"/>
<evidence type="ECO:0000255" key="2">
    <source>
        <dbReference type="HAMAP-Rule" id="MF_00492"/>
    </source>
</evidence>
<proteinExistence type="inferred from homology"/>
<dbReference type="EC" id="2.2.1.2" evidence="2"/>
<dbReference type="EMBL" id="CP001252">
    <property type="protein sequence ID" value="ACK47729.1"/>
    <property type="molecule type" value="Genomic_DNA"/>
</dbReference>
<dbReference type="RefSeq" id="WP_012588331.1">
    <property type="nucleotide sequence ID" value="NC_011663.1"/>
</dbReference>
<dbReference type="SMR" id="B8EFD7"/>
<dbReference type="KEGG" id="sbp:Sbal223_3245"/>
<dbReference type="HOGENOM" id="CLU_047470_0_1_6"/>
<dbReference type="UniPathway" id="UPA00115">
    <property type="reaction ID" value="UER00414"/>
</dbReference>
<dbReference type="Proteomes" id="UP000002507">
    <property type="component" value="Chromosome"/>
</dbReference>
<dbReference type="GO" id="GO:0005829">
    <property type="term" value="C:cytosol"/>
    <property type="evidence" value="ECO:0007669"/>
    <property type="project" value="TreeGrafter"/>
</dbReference>
<dbReference type="GO" id="GO:0004801">
    <property type="term" value="F:transaldolase activity"/>
    <property type="evidence" value="ECO:0000250"/>
    <property type="project" value="UniProtKB"/>
</dbReference>
<dbReference type="GO" id="GO:0005975">
    <property type="term" value="P:carbohydrate metabolic process"/>
    <property type="evidence" value="ECO:0007669"/>
    <property type="project" value="InterPro"/>
</dbReference>
<dbReference type="GO" id="GO:0006098">
    <property type="term" value="P:pentose-phosphate shunt"/>
    <property type="evidence" value="ECO:0007669"/>
    <property type="project" value="UniProtKB-UniRule"/>
</dbReference>
<dbReference type="CDD" id="cd00957">
    <property type="entry name" value="Transaldolase_TalAB"/>
    <property type="match status" value="1"/>
</dbReference>
<dbReference type="FunFam" id="3.20.20.70:FF:000002">
    <property type="entry name" value="Transaldolase"/>
    <property type="match status" value="1"/>
</dbReference>
<dbReference type="Gene3D" id="3.20.20.70">
    <property type="entry name" value="Aldolase class I"/>
    <property type="match status" value="1"/>
</dbReference>
<dbReference type="HAMAP" id="MF_00492">
    <property type="entry name" value="Transaldolase_1"/>
    <property type="match status" value="1"/>
</dbReference>
<dbReference type="InterPro" id="IPR013785">
    <property type="entry name" value="Aldolase_TIM"/>
</dbReference>
<dbReference type="InterPro" id="IPR001585">
    <property type="entry name" value="TAL/FSA"/>
</dbReference>
<dbReference type="InterPro" id="IPR004730">
    <property type="entry name" value="Transaldolase_1"/>
</dbReference>
<dbReference type="InterPro" id="IPR018225">
    <property type="entry name" value="Transaldolase_AS"/>
</dbReference>
<dbReference type="NCBIfam" id="NF009001">
    <property type="entry name" value="PRK12346.1"/>
    <property type="match status" value="1"/>
</dbReference>
<dbReference type="NCBIfam" id="TIGR00874">
    <property type="entry name" value="talAB"/>
    <property type="match status" value="1"/>
</dbReference>
<dbReference type="PANTHER" id="PTHR10683">
    <property type="entry name" value="TRANSALDOLASE"/>
    <property type="match status" value="1"/>
</dbReference>
<dbReference type="PANTHER" id="PTHR10683:SF18">
    <property type="entry name" value="TRANSALDOLASE"/>
    <property type="match status" value="1"/>
</dbReference>
<dbReference type="Pfam" id="PF00923">
    <property type="entry name" value="TAL_FSA"/>
    <property type="match status" value="1"/>
</dbReference>
<dbReference type="SUPFAM" id="SSF51569">
    <property type="entry name" value="Aldolase"/>
    <property type="match status" value="1"/>
</dbReference>
<dbReference type="PROSITE" id="PS01054">
    <property type="entry name" value="TRANSALDOLASE_1"/>
    <property type="match status" value="1"/>
</dbReference>
<dbReference type="PROSITE" id="PS00958">
    <property type="entry name" value="TRANSALDOLASE_2"/>
    <property type="match status" value="1"/>
</dbReference>
<gene>
    <name evidence="2" type="primary">tal</name>
    <name type="ordered locus">Sbal223_3245</name>
</gene>
<accession>B8EFD7</accession>
<feature type="chain" id="PRO_1000198455" description="Transaldolase">
    <location>
        <begin position="1"/>
        <end position="318"/>
    </location>
</feature>
<feature type="active site" description="Schiff-base intermediate with substrate" evidence="2">
    <location>
        <position position="132"/>
    </location>
</feature>